<accession>B7MAS0</accession>
<gene>
    <name evidence="1" type="primary">btuD</name>
    <name type="ordered locus">ECS88_1760</name>
</gene>
<reference key="1">
    <citation type="journal article" date="2009" name="PLoS Genet.">
        <title>Organised genome dynamics in the Escherichia coli species results in highly diverse adaptive paths.</title>
        <authorList>
            <person name="Touchon M."/>
            <person name="Hoede C."/>
            <person name="Tenaillon O."/>
            <person name="Barbe V."/>
            <person name="Baeriswyl S."/>
            <person name="Bidet P."/>
            <person name="Bingen E."/>
            <person name="Bonacorsi S."/>
            <person name="Bouchier C."/>
            <person name="Bouvet O."/>
            <person name="Calteau A."/>
            <person name="Chiapello H."/>
            <person name="Clermont O."/>
            <person name="Cruveiller S."/>
            <person name="Danchin A."/>
            <person name="Diard M."/>
            <person name="Dossat C."/>
            <person name="Karoui M.E."/>
            <person name="Frapy E."/>
            <person name="Garry L."/>
            <person name="Ghigo J.M."/>
            <person name="Gilles A.M."/>
            <person name="Johnson J."/>
            <person name="Le Bouguenec C."/>
            <person name="Lescat M."/>
            <person name="Mangenot S."/>
            <person name="Martinez-Jehanne V."/>
            <person name="Matic I."/>
            <person name="Nassif X."/>
            <person name="Oztas S."/>
            <person name="Petit M.A."/>
            <person name="Pichon C."/>
            <person name="Rouy Z."/>
            <person name="Ruf C.S."/>
            <person name="Schneider D."/>
            <person name="Tourret J."/>
            <person name="Vacherie B."/>
            <person name="Vallenet D."/>
            <person name="Medigue C."/>
            <person name="Rocha E.P.C."/>
            <person name="Denamur E."/>
        </authorList>
    </citation>
    <scope>NUCLEOTIDE SEQUENCE [LARGE SCALE GENOMIC DNA]</scope>
    <source>
        <strain>S88 / ExPEC</strain>
    </source>
</reference>
<evidence type="ECO:0000255" key="1">
    <source>
        <dbReference type="HAMAP-Rule" id="MF_01005"/>
    </source>
</evidence>
<name>BTUD_ECO45</name>
<protein>
    <recommendedName>
        <fullName evidence="1">Vitamin B12 import ATP-binding protein BtuD</fullName>
        <ecNumber evidence="1">7.6.2.8</ecNumber>
    </recommendedName>
    <alternativeName>
        <fullName evidence="1">Vitamin B12-transporting ATPase</fullName>
    </alternativeName>
</protein>
<dbReference type="EC" id="7.6.2.8" evidence="1"/>
<dbReference type="EMBL" id="CU928161">
    <property type="protein sequence ID" value="CAR03069.1"/>
    <property type="molecule type" value="Genomic_DNA"/>
</dbReference>
<dbReference type="RefSeq" id="WP_000029464.1">
    <property type="nucleotide sequence ID" value="NC_011742.1"/>
</dbReference>
<dbReference type="SMR" id="B7MAS0"/>
<dbReference type="KEGG" id="ecz:ECS88_1760"/>
<dbReference type="HOGENOM" id="CLU_000604_1_11_6"/>
<dbReference type="Proteomes" id="UP000000747">
    <property type="component" value="Chromosome"/>
</dbReference>
<dbReference type="GO" id="GO:0005886">
    <property type="term" value="C:plasma membrane"/>
    <property type="evidence" value="ECO:0007669"/>
    <property type="project" value="UniProtKB-SubCell"/>
</dbReference>
<dbReference type="GO" id="GO:0015420">
    <property type="term" value="F:ABC-type vitamin B12 transporter activity"/>
    <property type="evidence" value="ECO:0007669"/>
    <property type="project" value="UniProtKB-UniRule"/>
</dbReference>
<dbReference type="GO" id="GO:0005524">
    <property type="term" value="F:ATP binding"/>
    <property type="evidence" value="ECO:0007669"/>
    <property type="project" value="UniProtKB-KW"/>
</dbReference>
<dbReference type="GO" id="GO:0016887">
    <property type="term" value="F:ATP hydrolysis activity"/>
    <property type="evidence" value="ECO:0007669"/>
    <property type="project" value="InterPro"/>
</dbReference>
<dbReference type="CDD" id="cd03214">
    <property type="entry name" value="ABC_Iron-Siderophores_B12_Hemin"/>
    <property type="match status" value="1"/>
</dbReference>
<dbReference type="FunFam" id="3.40.50.300:FF:000462">
    <property type="entry name" value="Vitamin B12 import ATP-binding protein BtuD"/>
    <property type="match status" value="1"/>
</dbReference>
<dbReference type="Gene3D" id="3.40.50.300">
    <property type="entry name" value="P-loop containing nucleotide triphosphate hydrolases"/>
    <property type="match status" value="1"/>
</dbReference>
<dbReference type="HAMAP" id="MF_01005">
    <property type="entry name" value="BtuD"/>
    <property type="match status" value="1"/>
</dbReference>
<dbReference type="InterPro" id="IPR003593">
    <property type="entry name" value="AAA+_ATPase"/>
</dbReference>
<dbReference type="InterPro" id="IPR003439">
    <property type="entry name" value="ABC_transporter-like_ATP-bd"/>
</dbReference>
<dbReference type="InterPro" id="IPR017871">
    <property type="entry name" value="ABC_transporter-like_CS"/>
</dbReference>
<dbReference type="InterPro" id="IPR023693">
    <property type="entry name" value="ABC_transptr_BtuD"/>
</dbReference>
<dbReference type="InterPro" id="IPR050153">
    <property type="entry name" value="Metal_Ion_Import_ABC"/>
</dbReference>
<dbReference type="InterPro" id="IPR027417">
    <property type="entry name" value="P-loop_NTPase"/>
</dbReference>
<dbReference type="NCBIfam" id="NF002981">
    <property type="entry name" value="PRK03695.1"/>
    <property type="match status" value="1"/>
</dbReference>
<dbReference type="PANTHER" id="PTHR42734">
    <property type="entry name" value="METAL TRANSPORT SYSTEM ATP-BINDING PROTEIN TM_0124-RELATED"/>
    <property type="match status" value="1"/>
</dbReference>
<dbReference type="PANTHER" id="PTHR42734:SF18">
    <property type="entry name" value="VITAMIN B12 IMPORT ATP-BINDING PROTEIN BTUD"/>
    <property type="match status" value="1"/>
</dbReference>
<dbReference type="Pfam" id="PF00005">
    <property type="entry name" value="ABC_tran"/>
    <property type="match status" value="1"/>
</dbReference>
<dbReference type="SMART" id="SM00382">
    <property type="entry name" value="AAA"/>
    <property type="match status" value="1"/>
</dbReference>
<dbReference type="SUPFAM" id="SSF52540">
    <property type="entry name" value="P-loop containing nucleoside triphosphate hydrolases"/>
    <property type="match status" value="1"/>
</dbReference>
<dbReference type="PROSITE" id="PS00211">
    <property type="entry name" value="ABC_TRANSPORTER_1"/>
    <property type="match status" value="1"/>
</dbReference>
<dbReference type="PROSITE" id="PS50893">
    <property type="entry name" value="ABC_TRANSPORTER_2"/>
    <property type="match status" value="1"/>
</dbReference>
<feature type="chain" id="PRO_1000134658" description="Vitamin B12 import ATP-binding protein BtuD">
    <location>
        <begin position="1"/>
        <end position="249"/>
    </location>
</feature>
<feature type="domain" description="ABC transporter" evidence="1">
    <location>
        <begin position="1"/>
        <end position="233"/>
    </location>
</feature>
<feature type="binding site" evidence="1">
    <location>
        <begin position="33"/>
        <end position="40"/>
    </location>
    <ligand>
        <name>ATP</name>
        <dbReference type="ChEBI" id="CHEBI:30616"/>
    </ligand>
</feature>
<comment type="function">
    <text evidence="1">Part of the ABC transporter complex BtuCDF involved in vitamin B12 import. Responsible for energy coupling to the transport system.</text>
</comment>
<comment type="catalytic activity">
    <reaction evidence="1">
        <text>an R-cob(III)alamin(out) + ATP + H2O = an R-cob(III)alamin(in) + ADP + phosphate + H(+)</text>
        <dbReference type="Rhea" id="RHEA:17873"/>
        <dbReference type="ChEBI" id="CHEBI:15377"/>
        <dbReference type="ChEBI" id="CHEBI:15378"/>
        <dbReference type="ChEBI" id="CHEBI:30616"/>
        <dbReference type="ChEBI" id="CHEBI:43474"/>
        <dbReference type="ChEBI" id="CHEBI:140785"/>
        <dbReference type="ChEBI" id="CHEBI:456216"/>
        <dbReference type="EC" id="7.6.2.8"/>
    </reaction>
</comment>
<comment type="subunit">
    <text evidence="1">The complex is composed of two ATP-binding proteins (BtuD), two transmembrane proteins (BtuC) and a solute-binding protein (BtuF).</text>
</comment>
<comment type="subcellular location">
    <subcellularLocation>
        <location evidence="1">Cell inner membrane</location>
        <topology evidence="1">Peripheral membrane protein</topology>
    </subcellularLocation>
</comment>
<comment type="similarity">
    <text evidence="1">Belongs to the ABC transporter superfamily. Vitamin B12 importer (TC 3.A.1.13.1) family.</text>
</comment>
<organism>
    <name type="scientific">Escherichia coli O45:K1 (strain S88 / ExPEC)</name>
    <dbReference type="NCBI Taxonomy" id="585035"/>
    <lineage>
        <taxon>Bacteria</taxon>
        <taxon>Pseudomonadati</taxon>
        <taxon>Pseudomonadota</taxon>
        <taxon>Gammaproteobacteria</taxon>
        <taxon>Enterobacterales</taxon>
        <taxon>Enterobacteriaceae</taxon>
        <taxon>Escherichia</taxon>
    </lineage>
</organism>
<keyword id="KW-0067">ATP-binding</keyword>
<keyword id="KW-0997">Cell inner membrane</keyword>
<keyword id="KW-1003">Cell membrane</keyword>
<keyword id="KW-0472">Membrane</keyword>
<keyword id="KW-0547">Nucleotide-binding</keyword>
<keyword id="KW-1185">Reference proteome</keyword>
<keyword id="KW-1278">Translocase</keyword>
<keyword id="KW-0813">Transport</keyword>
<sequence length="249" mass="27085">MSIVMQLQDVAESTRLGPLSGEVRAGEILHLVGPNGAGKSTLLARMAGMTSGKGSIQFAGQPLEAWSATKLALHRAYLSQQQTPPFAMPVWHYLTLHQHDKTRTELLNDVAGALALDDKLGRSTNQLSGGEWQRVRLAAVVLQITPQANPAGQLLLLDEPMNSLDVAQQSALDKILSALCQQGLAIVMSSHDLNHTLRHAHRAWLLKGGKMLASGRREEVLTPANLAQAYGMNFRRLDIEGHRMLISTI</sequence>
<proteinExistence type="inferred from homology"/>